<reference key="1">
    <citation type="journal article" date="2002" name="Genome Res.">
        <title>The genome of Methanosarcina acetivorans reveals extensive metabolic and physiological diversity.</title>
        <authorList>
            <person name="Galagan J.E."/>
            <person name="Nusbaum C."/>
            <person name="Roy A."/>
            <person name="Endrizzi M.G."/>
            <person name="Macdonald P."/>
            <person name="FitzHugh W."/>
            <person name="Calvo S."/>
            <person name="Engels R."/>
            <person name="Smirnov S."/>
            <person name="Atnoor D."/>
            <person name="Brown A."/>
            <person name="Allen N."/>
            <person name="Naylor J."/>
            <person name="Stange-Thomann N."/>
            <person name="DeArellano K."/>
            <person name="Johnson R."/>
            <person name="Linton L."/>
            <person name="McEwan P."/>
            <person name="McKernan K."/>
            <person name="Talamas J."/>
            <person name="Tirrell A."/>
            <person name="Ye W."/>
            <person name="Zimmer A."/>
            <person name="Barber R.D."/>
            <person name="Cann I."/>
            <person name="Graham D.E."/>
            <person name="Grahame D.A."/>
            <person name="Guss A.M."/>
            <person name="Hedderich R."/>
            <person name="Ingram-Smith C."/>
            <person name="Kuettner H.C."/>
            <person name="Krzycki J.A."/>
            <person name="Leigh J.A."/>
            <person name="Li W."/>
            <person name="Liu J."/>
            <person name="Mukhopadhyay B."/>
            <person name="Reeve J.N."/>
            <person name="Smith K."/>
            <person name="Springer T.A."/>
            <person name="Umayam L.A."/>
            <person name="White O."/>
            <person name="White R.H."/>
            <person name="de Macario E.C."/>
            <person name="Ferry J.G."/>
            <person name="Jarrell K.F."/>
            <person name="Jing H."/>
            <person name="Macario A.J.L."/>
            <person name="Paulsen I.T."/>
            <person name="Pritchett M."/>
            <person name="Sowers K.R."/>
            <person name="Swanson R.V."/>
            <person name="Zinder S.H."/>
            <person name="Lander E."/>
            <person name="Metcalf W.W."/>
            <person name="Birren B."/>
        </authorList>
    </citation>
    <scope>NUCLEOTIDE SEQUENCE [LARGE SCALE GENOMIC DNA]</scope>
    <source>
        <strain>ATCC 35395 / DSM 2834 / JCM 12185 / C2A</strain>
    </source>
</reference>
<name>MTBC3_METAC</name>
<proteinExistence type="inferred from homology"/>
<accession>Q8TN69</accession>
<gene>
    <name type="primary">mtbC3</name>
    <name type="ordered locus">MA_2424</name>
</gene>
<organism>
    <name type="scientific">Methanosarcina acetivorans (strain ATCC 35395 / DSM 2834 / JCM 12185 / C2A)</name>
    <dbReference type="NCBI Taxonomy" id="188937"/>
    <lineage>
        <taxon>Archaea</taxon>
        <taxon>Methanobacteriati</taxon>
        <taxon>Methanobacteriota</taxon>
        <taxon>Stenosarchaea group</taxon>
        <taxon>Methanomicrobia</taxon>
        <taxon>Methanosarcinales</taxon>
        <taxon>Methanosarcinaceae</taxon>
        <taxon>Methanosarcina</taxon>
    </lineage>
</organism>
<comment type="function">
    <text evidence="1">Acts as a methyl group carrier between MtbB and MtbA.</text>
</comment>
<comment type="pathway">
    <text>One-carbon metabolism; methanogenesis from dimethylamine.</text>
</comment>
<comment type="similarity">
    <text evidence="4">Belongs to the methylamine corrinoid protein family.</text>
</comment>
<feature type="chain" id="PRO_0000216477" description="Dimethylamine corrinoid protein 3">
    <location>
        <begin position="1"/>
        <end position="213"/>
    </location>
</feature>
<feature type="domain" description="B12-binding N-terminal" evidence="3">
    <location>
        <begin position="1"/>
        <end position="91"/>
    </location>
</feature>
<feature type="domain" description="B12-binding" evidence="2">
    <location>
        <begin position="92"/>
        <end position="213"/>
    </location>
</feature>
<feature type="binding site" description="axial binding residue" evidence="1">
    <location>
        <position position="104"/>
    </location>
    <ligand>
        <name>methylcob(III)alamin</name>
        <dbReference type="ChEBI" id="CHEBI:28115"/>
    </ligand>
    <ligandPart>
        <name>Co</name>
        <dbReference type="ChEBI" id="CHEBI:27638"/>
    </ligandPart>
</feature>
<protein>
    <recommendedName>
        <fullName>Dimethylamine corrinoid protein 3</fullName>
    </recommendedName>
</protein>
<keyword id="KW-0170">Cobalt</keyword>
<keyword id="KW-0479">Metal-binding</keyword>
<keyword id="KW-0484">Methanogenesis</keyword>
<keyword id="KW-1185">Reference proteome</keyword>
<keyword id="KW-0677">Repeat</keyword>
<dbReference type="EMBL" id="AE010299">
    <property type="protein sequence ID" value="AAM05810.1"/>
    <property type="molecule type" value="Genomic_DNA"/>
</dbReference>
<dbReference type="RefSeq" id="WP_011022395.1">
    <property type="nucleotide sequence ID" value="NC_003552.1"/>
</dbReference>
<dbReference type="SMR" id="Q8TN69"/>
<dbReference type="STRING" id="188937.MA_2424"/>
<dbReference type="EnsemblBacteria" id="AAM05810">
    <property type="protein sequence ID" value="AAM05810"/>
    <property type="gene ID" value="MA_2424"/>
</dbReference>
<dbReference type="GeneID" id="1474313"/>
<dbReference type="KEGG" id="mac:MA_2424"/>
<dbReference type="HOGENOM" id="CLU_082102_1_0_2"/>
<dbReference type="InParanoid" id="Q8TN69"/>
<dbReference type="OrthoDB" id="134276at2157"/>
<dbReference type="PhylomeDB" id="Q8TN69"/>
<dbReference type="UniPathway" id="UPA00644"/>
<dbReference type="Proteomes" id="UP000002487">
    <property type="component" value="Chromosome"/>
</dbReference>
<dbReference type="GO" id="GO:0031419">
    <property type="term" value="F:cobalamin binding"/>
    <property type="evidence" value="ECO:0007669"/>
    <property type="project" value="InterPro"/>
</dbReference>
<dbReference type="GO" id="GO:0050897">
    <property type="term" value="F:cobalt ion binding"/>
    <property type="evidence" value="ECO:0007669"/>
    <property type="project" value="InterPro"/>
</dbReference>
<dbReference type="GO" id="GO:0008168">
    <property type="term" value="F:methyltransferase activity"/>
    <property type="evidence" value="ECO:0007669"/>
    <property type="project" value="UniProtKB-ARBA"/>
</dbReference>
<dbReference type="GO" id="GO:0015948">
    <property type="term" value="P:methanogenesis"/>
    <property type="evidence" value="ECO:0007669"/>
    <property type="project" value="UniProtKB-KW"/>
</dbReference>
<dbReference type="CDD" id="cd02070">
    <property type="entry name" value="corrinoid_protein_B12-BD"/>
    <property type="match status" value="1"/>
</dbReference>
<dbReference type="FunFam" id="3.40.50.280:FF:000003">
    <property type="entry name" value="Dimethylamine methyltransferase corrinoid protein"/>
    <property type="match status" value="1"/>
</dbReference>
<dbReference type="Gene3D" id="3.40.50.280">
    <property type="entry name" value="Cobalamin-binding domain"/>
    <property type="match status" value="1"/>
</dbReference>
<dbReference type="Gene3D" id="1.10.1240.10">
    <property type="entry name" value="Methionine synthase domain"/>
    <property type="match status" value="1"/>
</dbReference>
<dbReference type="InterPro" id="IPR003759">
    <property type="entry name" value="Cbl-bd_cap"/>
</dbReference>
<dbReference type="InterPro" id="IPR006158">
    <property type="entry name" value="Cobalamin-bd"/>
</dbReference>
<dbReference type="InterPro" id="IPR036724">
    <property type="entry name" value="Cobalamin-bd_sf"/>
</dbReference>
<dbReference type="InterPro" id="IPR012741">
    <property type="entry name" value="Corrinoid_p"/>
</dbReference>
<dbReference type="InterPro" id="IPR048095">
    <property type="entry name" value="Dimeth_corrin_MtbC"/>
</dbReference>
<dbReference type="InterPro" id="IPR050554">
    <property type="entry name" value="Met_Synthase/Corrinoid"/>
</dbReference>
<dbReference type="InterPro" id="IPR036594">
    <property type="entry name" value="Meth_synthase_dom"/>
</dbReference>
<dbReference type="NCBIfam" id="NF041607">
    <property type="entry name" value="dimeth_corrin_MtbC"/>
    <property type="match status" value="1"/>
</dbReference>
<dbReference type="NCBIfam" id="TIGR02370">
    <property type="entry name" value="pyl_corrinoid"/>
    <property type="match status" value="1"/>
</dbReference>
<dbReference type="PANTHER" id="PTHR45833">
    <property type="entry name" value="METHIONINE SYNTHASE"/>
    <property type="match status" value="1"/>
</dbReference>
<dbReference type="PANTHER" id="PTHR45833:SF1">
    <property type="entry name" value="METHIONINE SYNTHASE"/>
    <property type="match status" value="1"/>
</dbReference>
<dbReference type="Pfam" id="PF02310">
    <property type="entry name" value="B12-binding"/>
    <property type="match status" value="1"/>
</dbReference>
<dbReference type="Pfam" id="PF02607">
    <property type="entry name" value="B12-binding_2"/>
    <property type="match status" value="1"/>
</dbReference>
<dbReference type="SMART" id="SM01018">
    <property type="entry name" value="B12-binding_2"/>
    <property type="match status" value="1"/>
</dbReference>
<dbReference type="SUPFAM" id="SSF52242">
    <property type="entry name" value="Cobalamin (vitamin B12)-binding domain"/>
    <property type="match status" value="1"/>
</dbReference>
<dbReference type="SUPFAM" id="SSF47644">
    <property type="entry name" value="Methionine synthase domain"/>
    <property type="match status" value="1"/>
</dbReference>
<dbReference type="PROSITE" id="PS51332">
    <property type="entry name" value="B12_BINDING"/>
    <property type="match status" value="1"/>
</dbReference>
<dbReference type="PROSITE" id="PS51337">
    <property type="entry name" value="B12_BINDING_NTER"/>
    <property type="match status" value="1"/>
</dbReference>
<evidence type="ECO:0000250" key="1"/>
<evidence type="ECO:0000255" key="2">
    <source>
        <dbReference type="PROSITE-ProRule" id="PRU00666"/>
    </source>
</evidence>
<evidence type="ECO:0000255" key="3">
    <source>
        <dbReference type="PROSITE-ProRule" id="PRU00667"/>
    </source>
</evidence>
<evidence type="ECO:0000305" key="4"/>
<sequence>MADIEGLLHEVADAVISCKKEKVLEAVEKARAEVPPEEIIEKGLSAGMNQVGVLFERGKLFLPHVMMAADAMTTGVKLLEADLPAGAEKKLGVIVNGTVEGDVHDIGKSIVSTMLQSAGFEVHDIGRDVPIRDFIEKAKETDADMIGISALMTTTLQGQRDVIELLKEEGLRSRVKVMVGGAPATQAWADKIGADCYAENASEAVAKAKELLL</sequence>